<keyword id="KW-0067">ATP-binding</keyword>
<keyword id="KW-0963">Cytoplasm</keyword>
<keyword id="KW-0227">DNA damage</keyword>
<keyword id="KW-0233">DNA recombination</keyword>
<keyword id="KW-0234">DNA repair</keyword>
<keyword id="KW-0238">DNA-binding</keyword>
<keyword id="KW-0378">Hydrolase</keyword>
<keyword id="KW-0547">Nucleotide-binding</keyword>
<keyword id="KW-1185">Reference proteome</keyword>
<evidence type="ECO:0000255" key="1">
    <source>
        <dbReference type="HAMAP-Rule" id="MF_00016"/>
    </source>
</evidence>
<reference key="1">
    <citation type="journal article" date="2004" name="Proc. Natl. Acad. Sci. U.S.A.">
        <title>Structural flexibility in the Burkholderia mallei genome.</title>
        <authorList>
            <person name="Nierman W.C."/>
            <person name="DeShazer D."/>
            <person name="Kim H.S."/>
            <person name="Tettelin H."/>
            <person name="Nelson K.E."/>
            <person name="Feldblyum T.V."/>
            <person name="Ulrich R.L."/>
            <person name="Ronning C.M."/>
            <person name="Brinkac L.M."/>
            <person name="Daugherty S.C."/>
            <person name="Davidsen T.D."/>
            <person name="DeBoy R.T."/>
            <person name="Dimitrov G."/>
            <person name="Dodson R.J."/>
            <person name="Durkin A.S."/>
            <person name="Gwinn M.L."/>
            <person name="Haft D.H."/>
            <person name="Khouri H.M."/>
            <person name="Kolonay J.F."/>
            <person name="Madupu R."/>
            <person name="Mohammoud Y."/>
            <person name="Nelson W.C."/>
            <person name="Radune D."/>
            <person name="Romero C.M."/>
            <person name="Sarria S."/>
            <person name="Selengut J."/>
            <person name="Shamblin C."/>
            <person name="Sullivan S.A."/>
            <person name="White O."/>
            <person name="Yu Y."/>
            <person name="Zafar N."/>
            <person name="Zhou L."/>
            <person name="Fraser C.M."/>
        </authorList>
    </citation>
    <scope>NUCLEOTIDE SEQUENCE [LARGE SCALE GENOMIC DNA]</scope>
    <source>
        <strain>ATCC 23344</strain>
    </source>
</reference>
<proteinExistence type="inferred from homology"/>
<protein>
    <recommendedName>
        <fullName evidence="1">Holliday junction branch migration complex subunit RuvB</fullName>
        <ecNumber evidence="1">3.6.4.-</ecNumber>
    </recommendedName>
</protein>
<dbReference type="EC" id="3.6.4.-" evidence="1"/>
<dbReference type="EMBL" id="CP000010">
    <property type="protein sequence ID" value="AAU50216.1"/>
    <property type="molecule type" value="Genomic_DNA"/>
</dbReference>
<dbReference type="RefSeq" id="WP_004194268.1">
    <property type="nucleotide sequence ID" value="NC_006348.1"/>
</dbReference>
<dbReference type="RefSeq" id="YP_103911.1">
    <property type="nucleotide sequence ID" value="NC_006348.1"/>
</dbReference>
<dbReference type="SMR" id="Q62HA9"/>
<dbReference type="GeneID" id="93061494"/>
<dbReference type="KEGG" id="bma:BMA2353"/>
<dbReference type="PATRIC" id="fig|243160.12.peg.2424"/>
<dbReference type="eggNOG" id="COG2255">
    <property type="taxonomic scope" value="Bacteria"/>
</dbReference>
<dbReference type="HOGENOM" id="CLU_055599_1_0_4"/>
<dbReference type="Proteomes" id="UP000006693">
    <property type="component" value="Chromosome 1"/>
</dbReference>
<dbReference type="GO" id="GO:0005737">
    <property type="term" value="C:cytoplasm"/>
    <property type="evidence" value="ECO:0007669"/>
    <property type="project" value="UniProtKB-SubCell"/>
</dbReference>
<dbReference type="GO" id="GO:0048476">
    <property type="term" value="C:Holliday junction resolvase complex"/>
    <property type="evidence" value="ECO:0007669"/>
    <property type="project" value="UniProtKB-UniRule"/>
</dbReference>
<dbReference type="GO" id="GO:0005524">
    <property type="term" value="F:ATP binding"/>
    <property type="evidence" value="ECO:0007669"/>
    <property type="project" value="UniProtKB-UniRule"/>
</dbReference>
<dbReference type="GO" id="GO:0016887">
    <property type="term" value="F:ATP hydrolysis activity"/>
    <property type="evidence" value="ECO:0007669"/>
    <property type="project" value="InterPro"/>
</dbReference>
<dbReference type="GO" id="GO:0000400">
    <property type="term" value="F:four-way junction DNA binding"/>
    <property type="evidence" value="ECO:0007669"/>
    <property type="project" value="UniProtKB-UniRule"/>
</dbReference>
<dbReference type="GO" id="GO:0009378">
    <property type="term" value="F:four-way junction helicase activity"/>
    <property type="evidence" value="ECO:0007669"/>
    <property type="project" value="InterPro"/>
</dbReference>
<dbReference type="GO" id="GO:0006310">
    <property type="term" value="P:DNA recombination"/>
    <property type="evidence" value="ECO:0007669"/>
    <property type="project" value="UniProtKB-UniRule"/>
</dbReference>
<dbReference type="GO" id="GO:0006281">
    <property type="term" value="P:DNA repair"/>
    <property type="evidence" value="ECO:0007669"/>
    <property type="project" value="UniProtKB-UniRule"/>
</dbReference>
<dbReference type="CDD" id="cd00009">
    <property type="entry name" value="AAA"/>
    <property type="match status" value="1"/>
</dbReference>
<dbReference type="FunFam" id="1.10.10.10:FF:000086">
    <property type="entry name" value="Holliday junction ATP-dependent DNA helicase RuvB"/>
    <property type="match status" value="1"/>
</dbReference>
<dbReference type="FunFam" id="3.40.50.300:FF:000073">
    <property type="entry name" value="Holliday junction ATP-dependent DNA helicase RuvB"/>
    <property type="match status" value="1"/>
</dbReference>
<dbReference type="Gene3D" id="1.10.8.60">
    <property type="match status" value="1"/>
</dbReference>
<dbReference type="Gene3D" id="3.40.50.300">
    <property type="entry name" value="P-loop containing nucleotide triphosphate hydrolases"/>
    <property type="match status" value="1"/>
</dbReference>
<dbReference type="Gene3D" id="1.10.10.10">
    <property type="entry name" value="Winged helix-like DNA-binding domain superfamily/Winged helix DNA-binding domain"/>
    <property type="match status" value="1"/>
</dbReference>
<dbReference type="HAMAP" id="MF_00016">
    <property type="entry name" value="DNA_HJ_migration_RuvB"/>
    <property type="match status" value="1"/>
</dbReference>
<dbReference type="InterPro" id="IPR003593">
    <property type="entry name" value="AAA+_ATPase"/>
</dbReference>
<dbReference type="InterPro" id="IPR041445">
    <property type="entry name" value="AAA_lid_4"/>
</dbReference>
<dbReference type="InterPro" id="IPR004605">
    <property type="entry name" value="DNA_helicase_Holl-junc_RuvB"/>
</dbReference>
<dbReference type="InterPro" id="IPR027417">
    <property type="entry name" value="P-loop_NTPase"/>
</dbReference>
<dbReference type="InterPro" id="IPR008824">
    <property type="entry name" value="RuvB-like_N"/>
</dbReference>
<dbReference type="InterPro" id="IPR008823">
    <property type="entry name" value="RuvB_C"/>
</dbReference>
<dbReference type="InterPro" id="IPR036388">
    <property type="entry name" value="WH-like_DNA-bd_sf"/>
</dbReference>
<dbReference type="InterPro" id="IPR036390">
    <property type="entry name" value="WH_DNA-bd_sf"/>
</dbReference>
<dbReference type="NCBIfam" id="NF000868">
    <property type="entry name" value="PRK00080.1"/>
    <property type="match status" value="1"/>
</dbReference>
<dbReference type="NCBIfam" id="TIGR00635">
    <property type="entry name" value="ruvB"/>
    <property type="match status" value="1"/>
</dbReference>
<dbReference type="PANTHER" id="PTHR42848">
    <property type="match status" value="1"/>
</dbReference>
<dbReference type="PANTHER" id="PTHR42848:SF1">
    <property type="entry name" value="HOLLIDAY JUNCTION BRANCH MIGRATION COMPLEX SUBUNIT RUVB"/>
    <property type="match status" value="1"/>
</dbReference>
<dbReference type="Pfam" id="PF17864">
    <property type="entry name" value="AAA_lid_4"/>
    <property type="match status" value="1"/>
</dbReference>
<dbReference type="Pfam" id="PF05491">
    <property type="entry name" value="RuvB_C"/>
    <property type="match status" value="1"/>
</dbReference>
<dbReference type="Pfam" id="PF05496">
    <property type="entry name" value="RuvB_N"/>
    <property type="match status" value="1"/>
</dbReference>
<dbReference type="SMART" id="SM00382">
    <property type="entry name" value="AAA"/>
    <property type="match status" value="1"/>
</dbReference>
<dbReference type="SUPFAM" id="SSF52540">
    <property type="entry name" value="P-loop containing nucleoside triphosphate hydrolases"/>
    <property type="match status" value="1"/>
</dbReference>
<dbReference type="SUPFAM" id="SSF46785">
    <property type="entry name" value="Winged helix' DNA-binding domain"/>
    <property type="match status" value="1"/>
</dbReference>
<comment type="function">
    <text evidence="1">The RuvA-RuvB-RuvC complex processes Holliday junction (HJ) DNA during genetic recombination and DNA repair, while the RuvA-RuvB complex plays an important role in the rescue of blocked DNA replication forks via replication fork reversal (RFR). RuvA specifically binds to HJ cruciform DNA, conferring on it an open structure. The RuvB hexamer acts as an ATP-dependent pump, pulling dsDNA into and through the RuvAB complex. RuvB forms 2 homohexamers on either side of HJ DNA bound by 1 or 2 RuvA tetramers; 4 subunits per hexamer contact DNA at a time. Coordinated motions by a converter formed by DNA-disengaged RuvB subunits stimulates ATP hydrolysis and nucleotide exchange. Immobilization of the converter enables RuvB to convert the ATP-contained energy into a lever motion, pulling 2 nucleotides of DNA out of the RuvA tetramer per ATP hydrolyzed, thus driving DNA branch migration. The RuvB motors rotate together with the DNA substrate, which together with the progressing nucleotide cycle form the mechanistic basis for DNA recombination by continuous HJ branch migration. Branch migration allows RuvC to scan DNA until it finds its consensus sequence, where it cleaves and resolves cruciform DNA.</text>
</comment>
<comment type="catalytic activity">
    <reaction evidence="1">
        <text>ATP + H2O = ADP + phosphate + H(+)</text>
        <dbReference type="Rhea" id="RHEA:13065"/>
        <dbReference type="ChEBI" id="CHEBI:15377"/>
        <dbReference type="ChEBI" id="CHEBI:15378"/>
        <dbReference type="ChEBI" id="CHEBI:30616"/>
        <dbReference type="ChEBI" id="CHEBI:43474"/>
        <dbReference type="ChEBI" id="CHEBI:456216"/>
    </reaction>
</comment>
<comment type="subunit">
    <text evidence="1">Homohexamer. Forms an RuvA(8)-RuvB(12)-Holliday junction (HJ) complex. HJ DNA is sandwiched between 2 RuvA tetramers; dsDNA enters through RuvA and exits via RuvB. An RuvB hexamer assembles on each DNA strand where it exits the tetramer. Each RuvB hexamer is contacted by two RuvA subunits (via domain III) on 2 adjacent RuvB subunits; this complex drives branch migration. In the full resolvosome a probable DNA-RuvA(4)-RuvB(12)-RuvC(2) complex forms which resolves the HJ.</text>
</comment>
<comment type="subcellular location">
    <subcellularLocation>
        <location evidence="1">Cytoplasm</location>
    </subcellularLocation>
</comment>
<comment type="domain">
    <text evidence="1">Has 3 domains, the large (RuvB-L) and small ATPase (RuvB-S) domains and the C-terminal head (RuvB-H) domain. The head domain binds DNA, while the ATPase domains jointly bind ATP, ADP or are empty depending on the state of the subunit in the translocation cycle. During a single DNA translocation step the structure of each domain remains the same, but their relative positions change.</text>
</comment>
<comment type="similarity">
    <text evidence="1">Belongs to the RuvB family.</text>
</comment>
<feature type="chain" id="PRO_0000165508" description="Holliday junction branch migration complex subunit RuvB">
    <location>
        <begin position="1"/>
        <end position="356"/>
    </location>
</feature>
<feature type="region of interest" description="Large ATPase domain (RuvB-L)" evidence="1">
    <location>
        <begin position="4"/>
        <end position="190"/>
    </location>
</feature>
<feature type="region of interest" description="Small ATPAse domain (RuvB-S)" evidence="1">
    <location>
        <begin position="191"/>
        <end position="261"/>
    </location>
</feature>
<feature type="region of interest" description="Head domain (RuvB-H)" evidence="1">
    <location>
        <begin position="264"/>
        <end position="356"/>
    </location>
</feature>
<feature type="binding site" evidence="1">
    <location>
        <position position="29"/>
    </location>
    <ligand>
        <name>ATP</name>
        <dbReference type="ChEBI" id="CHEBI:30616"/>
    </ligand>
</feature>
<feature type="binding site" evidence="1">
    <location>
        <position position="30"/>
    </location>
    <ligand>
        <name>ATP</name>
        <dbReference type="ChEBI" id="CHEBI:30616"/>
    </ligand>
</feature>
<feature type="binding site" evidence="1">
    <location>
        <position position="71"/>
    </location>
    <ligand>
        <name>ATP</name>
        <dbReference type="ChEBI" id="CHEBI:30616"/>
    </ligand>
</feature>
<feature type="binding site" evidence="1">
    <location>
        <position position="74"/>
    </location>
    <ligand>
        <name>ATP</name>
        <dbReference type="ChEBI" id="CHEBI:30616"/>
    </ligand>
</feature>
<feature type="binding site" evidence="1">
    <location>
        <position position="75"/>
    </location>
    <ligand>
        <name>ATP</name>
        <dbReference type="ChEBI" id="CHEBI:30616"/>
    </ligand>
</feature>
<feature type="binding site" evidence="1">
    <location>
        <position position="75"/>
    </location>
    <ligand>
        <name>Mg(2+)</name>
        <dbReference type="ChEBI" id="CHEBI:18420"/>
    </ligand>
</feature>
<feature type="binding site" evidence="1">
    <location>
        <position position="76"/>
    </location>
    <ligand>
        <name>ATP</name>
        <dbReference type="ChEBI" id="CHEBI:30616"/>
    </ligand>
</feature>
<feature type="binding site" evidence="1">
    <location>
        <begin position="137"/>
        <end position="139"/>
    </location>
    <ligand>
        <name>ATP</name>
        <dbReference type="ChEBI" id="CHEBI:30616"/>
    </ligand>
</feature>
<feature type="binding site" evidence="1">
    <location>
        <position position="180"/>
    </location>
    <ligand>
        <name>ATP</name>
        <dbReference type="ChEBI" id="CHEBI:30616"/>
    </ligand>
</feature>
<feature type="binding site" evidence="1">
    <location>
        <position position="190"/>
    </location>
    <ligand>
        <name>ATP</name>
        <dbReference type="ChEBI" id="CHEBI:30616"/>
    </ligand>
</feature>
<feature type="binding site" evidence="1">
    <location>
        <position position="227"/>
    </location>
    <ligand>
        <name>ATP</name>
        <dbReference type="ChEBI" id="CHEBI:30616"/>
    </ligand>
</feature>
<feature type="binding site" evidence="1">
    <location>
        <position position="300"/>
    </location>
    <ligand>
        <name>DNA</name>
        <dbReference type="ChEBI" id="CHEBI:16991"/>
    </ligand>
</feature>
<feature type="binding site" evidence="1">
    <location>
        <position position="319"/>
    </location>
    <ligand>
        <name>DNA</name>
        <dbReference type="ChEBI" id="CHEBI:16991"/>
    </ligand>
</feature>
<feature type="binding site" evidence="1">
    <location>
        <position position="324"/>
    </location>
    <ligand>
        <name>DNA</name>
        <dbReference type="ChEBI" id="CHEBI:16991"/>
    </ligand>
</feature>
<sequence>MIETDKLAAERIIAATPASSHEEAFERALRPRQLDEYVGQEKVRDQLEIFIEAAKRRSEALDHVLLFGPPGLGKTTLAHIIAREMGVNLRQTSGPVLERAGDLAALLTNLEANDVLFIDEIHRLSPVVEEILYPALEDYQIDIMIGEGPAARSVKLDLQPFTLVGATTRAGMLTNPLRDRFGIVARLEFYDAEQLSRIVRRSAALLNAQIDPAGALEIAKRSRGTPRIANRLLRRVRDYAEVKADGNITAAVADAALAMLDVDPVGFDLMDRKLLEAILHKFDGGPVGVDNLAAAIGEERDTIEDVLEPYLIQQGFLQRTPRGRVATLLTYRHFGLSAPDAANPVRNLWDTPDAEC</sequence>
<gene>
    <name evidence="1" type="primary">ruvB</name>
    <name type="ordered locus">BMA2353</name>
</gene>
<organism>
    <name type="scientific">Burkholderia mallei (strain ATCC 23344)</name>
    <dbReference type="NCBI Taxonomy" id="243160"/>
    <lineage>
        <taxon>Bacteria</taxon>
        <taxon>Pseudomonadati</taxon>
        <taxon>Pseudomonadota</taxon>
        <taxon>Betaproteobacteria</taxon>
        <taxon>Burkholderiales</taxon>
        <taxon>Burkholderiaceae</taxon>
        <taxon>Burkholderia</taxon>
        <taxon>pseudomallei group</taxon>
    </lineage>
</organism>
<accession>Q62HA9</accession>
<name>RUVB_BURMA</name>